<dbReference type="EMBL" id="L77117">
    <property type="protein sequence ID" value="AAB98497.1"/>
    <property type="molecule type" value="Genomic_DNA"/>
</dbReference>
<dbReference type="PIR" id="C64363">
    <property type="entry name" value="C64363"/>
</dbReference>
<dbReference type="PDB" id="2Z8U">
    <property type="method" value="X-ray"/>
    <property type="resolution" value="1.90 A"/>
    <property type="chains" value="A/B/P/Q=4-183"/>
</dbReference>
<dbReference type="PDBsum" id="2Z8U"/>
<dbReference type="SMR" id="Q57930"/>
<dbReference type="FunCoup" id="Q57930">
    <property type="interactions" value="156"/>
</dbReference>
<dbReference type="STRING" id="243232.MJ_0507"/>
<dbReference type="PaxDb" id="243232-MJ_0507"/>
<dbReference type="EnsemblBacteria" id="AAB98497">
    <property type="protein sequence ID" value="AAB98497"/>
    <property type="gene ID" value="MJ_0507"/>
</dbReference>
<dbReference type="KEGG" id="mja:MJ_0507"/>
<dbReference type="eggNOG" id="arCOG01764">
    <property type="taxonomic scope" value="Archaea"/>
</dbReference>
<dbReference type="HOGENOM" id="CLU_060161_4_3_2"/>
<dbReference type="InParanoid" id="Q57930"/>
<dbReference type="PhylomeDB" id="Q57930"/>
<dbReference type="EvolutionaryTrace" id="Q57930"/>
<dbReference type="Proteomes" id="UP000000805">
    <property type="component" value="Chromosome"/>
</dbReference>
<dbReference type="GO" id="GO:0003677">
    <property type="term" value="F:DNA binding"/>
    <property type="evidence" value="ECO:0007669"/>
    <property type="project" value="UniProtKB-KW"/>
</dbReference>
<dbReference type="GO" id="GO:0003700">
    <property type="term" value="F:DNA-binding transcription factor activity"/>
    <property type="evidence" value="ECO:0007669"/>
    <property type="project" value="UniProtKB-UniRule"/>
</dbReference>
<dbReference type="GO" id="GO:0140223">
    <property type="term" value="F:general transcription initiation factor activity"/>
    <property type="evidence" value="ECO:0000318"/>
    <property type="project" value="GO_Central"/>
</dbReference>
<dbReference type="GO" id="GO:0006352">
    <property type="term" value="P:DNA-templated transcription initiation"/>
    <property type="evidence" value="ECO:0000318"/>
    <property type="project" value="GO_Central"/>
</dbReference>
<dbReference type="CDD" id="cd04518">
    <property type="entry name" value="TBP_archaea"/>
    <property type="match status" value="1"/>
</dbReference>
<dbReference type="FunFam" id="3.30.310.10:FF:000007">
    <property type="entry name" value="TATA-box-binding protein"/>
    <property type="match status" value="1"/>
</dbReference>
<dbReference type="FunFam" id="3.30.310.10:FF:000010">
    <property type="entry name" value="TATA-box-binding protein"/>
    <property type="match status" value="1"/>
</dbReference>
<dbReference type="Gene3D" id="3.30.310.10">
    <property type="entry name" value="TATA-Binding Protein"/>
    <property type="match status" value="2"/>
</dbReference>
<dbReference type="HAMAP" id="MF_00408">
    <property type="entry name" value="TATA_bind_prot_arch"/>
    <property type="match status" value="1"/>
</dbReference>
<dbReference type="InterPro" id="IPR000814">
    <property type="entry name" value="TBP"/>
</dbReference>
<dbReference type="InterPro" id="IPR033711">
    <property type="entry name" value="TBP_archaea"/>
</dbReference>
<dbReference type="InterPro" id="IPR030491">
    <property type="entry name" value="TBP_CS"/>
</dbReference>
<dbReference type="InterPro" id="IPR012295">
    <property type="entry name" value="TBP_dom_sf"/>
</dbReference>
<dbReference type="NCBIfam" id="NF001593">
    <property type="entry name" value="PRK00394.1-2"/>
    <property type="match status" value="1"/>
</dbReference>
<dbReference type="NCBIfam" id="NF001594">
    <property type="entry name" value="PRK00394.1-3"/>
    <property type="match status" value="1"/>
</dbReference>
<dbReference type="PANTHER" id="PTHR10126">
    <property type="entry name" value="TATA-BOX BINDING PROTEIN"/>
    <property type="match status" value="1"/>
</dbReference>
<dbReference type="Pfam" id="PF00352">
    <property type="entry name" value="TBP"/>
    <property type="match status" value="2"/>
</dbReference>
<dbReference type="PRINTS" id="PR00686">
    <property type="entry name" value="TIFACTORIID"/>
</dbReference>
<dbReference type="SUPFAM" id="SSF55945">
    <property type="entry name" value="TATA-box binding protein-like"/>
    <property type="match status" value="2"/>
</dbReference>
<dbReference type="PROSITE" id="PS00351">
    <property type="entry name" value="TFIID"/>
    <property type="match status" value="2"/>
</dbReference>
<accession>Q57930</accession>
<name>TBP_METJA</name>
<comment type="function">
    <text evidence="1">General factor that plays a role in the activation of archaeal genes transcribed by RNA polymerase. Binds specifically to the TATA box promoter element which lies close to the position of transcription initiation (By similarity).</text>
</comment>
<comment type="similarity">
    <text evidence="2">Belongs to the TBP family.</text>
</comment>
<proteinExistence type="evidence at protein level"/>
<protein>
    <recommendedName>
        <fullName>TATA-box-binding protein</fullName>
    </recommendedName>
    <alternativeName>
        <fullName>Box A-binding protein</fullName>
        <shortName>BAP</shortName>
    </alternativeName>
    <alternativeName>
        <fullName>TATA sequence-binding protein</fullName>
        <shortName>TBP</shortName>
    </alternativeName>
    <alternativeName>
        <fullName>TATA-box factor</fullName>
    </alternativeName>
</protein>
<organism>
    <name type="scientific">Methanocaldococcus jannaschii (strain ATCC 43067 / DSM 2661 / JAL-1 / JCM 10045 / NBRC 100440)</name>
    <name type="common">Methanococcus jannaschii</name>
    <dbReference type="NCBI Taxonomy" id="243232"/>
    <lineage>
        <taxon>Archaea</taxon>
        <taxon>Methanobacteriati</taxon>
        <taxon>Methanobacteriota</taxon>
        <taxon>Methanomada group</taxon>
        <taxon>Methanococci</taxon>
        <taxon>Methanococcales</taxon>
        <taxon>Methanocaldococcaceae</taxon>
        <taxon>Methanocaldococcus</taxon>
    </lineage>
</organism>
<evidence type="ECO:0000250" key="1"/>
<evidence type="ECO:0000305" key="2"/>
<evidence type="ECO:0007829" key="3">
    <source>
        <dbReference type="PDB" id="2Z8U"/>
    </source>
</evidence>
<keyword id="KW-0002">3D-structure</keyword>
<keyword id="KW-0238">DNA-binding</keyword>
<keyword id="KW-1185">Reference proteome</keyword>
<keyword id="KW-0677">Repeat</keyword>
<keyword id="KW-0804">Transcription</keyword>
<keyword id="KW-0805">Transcription regulation</keyword>
<gene>
    <name type="primary">tbp</name>
    <name type="ordered locus">MJ0507</name>
</gene>
<reference key="1">
    <citation type="journal article" date="1996" name="Science">
        <title>Complete genome sequence of the methanogenic archaeon, Methanococcus jannaschii.</title>
        <authorList>
            <person name="Bult C.J."/>
            <person name="White O."/>
            <person name="Olsen G.J."/>
            <person name="Zhou L."/>
            <person name="Fleischmann R.D."/>
            <person name="Sutton G.G."/>
            <person name="Blake J.A."/>
            <person name="FitzGerald L.M."/>
            <person name="Clayton R.A."/>
            <person name="Gocayne J.D."/>
            <person name="Kerlavage A.R."/>
            <person name="Dougherty B.A."/>
            <person name="Tomb J.-F."/>
            <person name="Adams M.D."/>
            <person name="Reich C.I."/>
            <person name="Overbeek R."/>
            <person name="Kirkness E.F."/>
            <person name="Weinstock K.G."/>
            <person name="Merrick J.M."/>
            <person name="Glodek A."/>
            <person name="Scott J.L."/>
            <person name="Geoghagen N.S.M."/>
            <person name="Weidman J.F."/>
            <person name="Fuhrmann J.L."/>
            <person name="Nguyen D."/>
            <person name="Utterback T.R."/>
            <person name="Kelley J.M."/>
            <person name="Peterson J.D."/>
            <person name="Sadow P.W."/>
            <person name="Hanna M.C."/>
            <person name="Cotton M.D."/>
            <person name="Roberts K.M."/>
            <person name="Hurst M.A."/>
            <person name="Kaine B.P."/>
            <person name="Borodovsky M."/>
            <person name="Klenk H.-P."/>
            <person name="Fraser C.M."/>
            <person name="Smith H.O."/>
            <person name="Woese C.R."/>
            <person name="Venter J.C."/>
        </authorList>
    </citation>
    <scope>NUCLEOTIDE SEQUENCE [LARGE SCALE GENOMIC DNA]</scope>
    <source>
        <strain>ATCC 43067 / DSM 2661 / JAL-1 / JCM 10045 / NBRC 100440</strain>
    </source>
</reference>
<reference key="2">
    <citation type="journal article" date="2008" name="Genes Cells">
        <title>Crystal structure of Methanococcus jannaschii TATA box-binding protein.</title>
        <authorList>
            <person name="Adachi N."/>
            <person name="Senda M."/>
            <person name="Natsume R."/>
            <person name="Senda T."/>
            <person name="Horikoshi M."/>
        </authorList>
    </citation>
    <scope>X-RAY CRYSTALLOGRAPHY (1.9 ANGSTROMS) OF 4-183</scope>
</reference>
<feature type="chain" id="PRO_0000154008" description="TATA-box-binding protein">
    <location>
        <begin position="1"/>
        <end position="183"/>
    </location>
</feature>
<feature type="repeat" description="1">
    <location>
        <begin position="10"/>
        <end position="86"/>
    </location>
</feature>
<feature type="repeat" description="2">
    <location>
        <begin position="101"/>
        <end position="177"/>
    </location>
</feature>
<feature type="strand" evidence="3">
    <location>
        <begin position="9"/>
        <end position="18"/>
    </location>
</feature>
<feature type="helix" evidence="3">
    <location>
        <begin position="25"/>
        <end position="31"/>
    </location>
</feature>
<feature type="turn" evidence="3">
    <location>
        <begin position="39"/>
        <end position="41"/>
    </location>
</feature>
<feature type="strand" evidence="3">
    <location>
        <begin position="45"/>
        <end position="49"/>
    </location>
</feature>
<feature type="turn" evidence="3">
    <location>
        <begin position="50"/>
        <end position="53"/>
    </location>
</feature>
<feature type="strand" evidence="3">
    <location>
        <begin position="54"/>
        <end position="58"/>
    </location>
</feature>
<feature type="strand" evidence="3">
    <location>
        <begin position="62"/>
        <end position="71"/>
    </location>
</feature>
<feature type="helix" evidence="3">
    <location>
        <begin position="72"/>
        <end position="88"/>
    </location>
</feature>
<feature type="strand" evidence="3">
    <location>
        <begin position="100"/>
        <end position="109"/>
    </location>
</feature>
<feature type="helix" evidence="3">
    <location>
        <begin position="116"/>
        <end position="122"/>
    </location>
</feature>
<feature type="strand" evidence="3">
    <location>
        <begin position="126"/>
        <end position="128"/>
    </location>
</feature>
<feature type="turn" evidence="3">
    <location>
        <begin position="130"/>
        <end position="132"/>
    </location>
</feature>
<feature type="strand" evidence="3">
    <location>
        <begin position="133"/>
        <end position="140"/>
    </location>
</feature>
<feature type="turn" evidence="3">
    <location>
        <begin position="141"/>
        <end position="144"/>
    </location>
</feature>
<feature type="strand" evidence="3">
    <location>
        <begin position="145"/>
        <end position="149"/>
    </location>
</feature>
<feature type="strand" evidence="3">
    <location>
        <begin position="153"/>
        <end position="159"/>
    </location>
</feature>
<feature type="helix" evidence="3">
    <location>
        <begin position="163"/>
        <end position="180"/>
    </location>
</feature>
<sequence length="183" mass="20233">MKIMEPEIKIVNVVVSTKIGDNIDLEEVAMILENAEYEPEQFPGLVCRLSVPKVALLIFRSGKVNCTGAKSKEEAEIAIKKIIKELKDAGIDVIENPEIKIQNMVATADLGIEPNLDDIALMVEGTEYEPEQFPGLVYRLDDPKVVVLIFGSGKVVITGLKSEEDAKRALKKILDTIKEVQEL</sequence>